<organism>
    <name type="scientific">Acinetobacter baumannii (strain SDF)</name>
    <dbReference type="NCBI Taxonomy" id="509170"/>
    <lineage>
        <taxon>Bacteria</taxon>
        <taxon>Pseudomonadati</taxon>
        <taxon>Pseudomonadota</taxon>
        <taxon>Gammaproteobacteria</taxon>
        <taxon>Moraxellales</taxon>
        <taxon>Moraxellaceae</taxon>
        <taxon>Acinetobacter</taxon>
        <taxon>Acinetobacter calcoaceticus/baumannii complex</taxon>
    </lineage>
</organism>
<proteinExistence type="inferred from homology"/>
<comment type="cofactor">
    <cofactor evidence="1">
        <name>Zn(2+)</name>
        <dbReference type="ChEBI" id="CHEBI:29105"/>
    </cofactor>
    <text evidence="1">Binds 1 zinc ion per subunit.</text>
</comment>
<comment type="subcellular location">
    <subcellularLocation>
        <location evidence="1">Cell inner membrane</location>
        <topology evidence="1">Multi-pass membrane protein</topology>
    </subcellularLocation>
</comment>
<comment type="similarity">
    <text evidence="1">Belongs to the peptidase M48B family.</text>
</comment>
<gene>
    <name evidence="1" type="primary">htpX</name>
    <name type="ordered locus">ABSDF0828</name>
</gene>
<protein>
    <recommendedName>
        <fullName evidence="1">Protease HtpX</fullName>
        <ecNumber evidence="1">3.4.24.-</ecNumber>
    </recommendedName>
    <alternativeName>
        <fullName evidence="1">Heat shock protein HtpX</fullName>
    </alternativeName>
</protein>
<accession>B0VT08</accession>
<reference key="1">
    <citation type="journal article" date="2008" name="PLoS ONE">
        <title>Comparative analysis of Acinetobacters: three genomes for three lifestyles.</title>
        <authorList>
            <person name="Vallenet D."/>
            <person name="Nordmann P."/>
            <person name="Barbe V."/>
            <person name="Poirel L."/>
            <person name="Mangenot S."/>
            <person name="Bataille E."/>
            <person name="Dossat C."/>
            <person name="Gas S."/>
            <person name="Kreimeyer A."/>
            <person name="Lenoble P."/>
            <person name="Oztas S."/>
            <person name="Poulain J."/>
            <person name="Segurens B."/>
            <person name="Robert C."/>
            <person name="Abergel C."/>
            <person name="Claverie J.-M."/>
            <person name="Raoult D."/>
            <person name="Medigue C."/>
            <person name="Weissenbach J."/>
            <person name="Cruveiller S."/>
        </authorList>
    </citation>
    <scope>NUCLEOTIDE SEQUENCE [LARGE SCALE GENOMIC DNA]</scope>
    <source>
        <strain>SDF</strain>
    </source>
</reference>
<sequence>MMRIGLFLLTNLAVLVVAGIILSLFGVGSYHGAGGLNLGNLLVICFVFGMVGSLVSLFMSKWMAKKTTGTELIDPNAPRNQAESWLLQTVAELSQRAGINMPEVGIFPSYQSNAFATGWNKNDALVAVSSGLLERMNKDELRAVLAHEIGHVANGDMVTLALIQGVVNAFVMFFARVVGDFIDRNVFGRQDNEAPGMGYFIITMVLDIVFGILASAIVMWFSRYREYRADEAGARLAGKQAMISALLRLQAETELPDQMPKEMKAFAIAEGKEQGFSLAALFQTHPTIEQRVAALHQLDCP</sequence>
<keyword id="KW-0997">Cell inner membrane</keyword>
<keyword id="KW-1003">Cell membrane</keyword>
<keyword id="KW-0378">Hydrolase</keyword>
<keyword id="KW-0472">Membrane</keyword>
<keyword id="KW-0479">Metal-binding</keyword>
<keyword id="KW-0482">Metalloprotease</keyword>
<keyword id="KW-0645">Protease</keyword>
<keyword id="KW-0346">Stress response</keyword>
<keyword id="KW-0812">Transmembrane</keyword>
<keyword id="KW-1133">Transmembrane helix</keyword>
<keyword id="KW-0862">Zinc</keyword>
<dbReference type="EC" id="3.4.24.-" evidence="1"/>
<dbReference type="EMBL" id="CU468230">
    <property type="protein sequence ID" value="CAP00195.1"/>
    <property type="molecule type" value="Genomic_DNA"/>
</dbReference>
<dbReference type="SMR" id="B0VT08"/>
<dbReference type="MEROPS" id="M48.002"/>
<dbReference type="KEGG" id="abm:ABSDF0828"/>
<dbReference type="HOGENOM" id="CLU_042266_1_0_6"/>
<dbReference type="Proteomes" id="UP000001741">
    <property type="component" value="Chromosome"/>
</dbReference>
<dbReference type="GO" id="GO:0005886">
    <property type="term" value="C:plasma membrane"/>
    <property type="evidence" value="ECO:0007669"/>
    <property type="project" value="UniProtKB-SubCell"/>
</dbReference>
<dbReference type="GO" id="GO:0004222">
    <property type="term" value="F:metalloendopeptidase activity"/>
    <property type="evidence" value="ECO:0007669"/>
    <property type="project" value="UniProtKB-UniRule"/>
</dbReference>
<dbReference type="GO" id="GO:0008270">
    <property type="term" value="F:zinc ion binding"/>
    <property type="evidence" value="ECO:0007669"/>
    <property type="project" value="UniProtKB-UniRule"/>
</dbReference>
<dbReference type="GO" id="GO:0006508">
    <property type="term" value="P:proteolysis"/>
    <property type="evidence" value="ECO:0007669"/>
    <property type="project" value="UniProtKB-KW"/>
</dbReference>
<dbReference type="CDD" id="cd07335">
    <property type="entry name" value="M48B_HtpX_like"/>
    <property type="match status" value="1"/>
</dbReference>
<dbReference type="Gene3D" id="3.30.2010.10">
    <property type="entry name" value="Metalloproteases ('zincins'), catalytic domain"/>
    <property type="match status" value="1"/>
</dbReference>
<dbReference type="HAMAP" id="MF_00188">
    <property type="entry name" value="Pept_M48_protease_HtpX"/>
    <property type="match status" value="1"/>
</dbReference>
<dbReference type="InterPro" id="IPR050083">
    <property type="entry name" value="HtpX_protease"/>
</dbReference>
<dbReference type="InterPro" id="IPR022919">
    <property type="entry name" value="Pept_M48_protease_HtpX"/>
</dbReference>
<dbReference type="InterPro" id="IPR001915">
    <property type="entry name" value="Peptidase_M48"/>
</dbReference>
<dbReference type="NCBIfam" id="NF003965">
    <property type="entry name" value="PRK05457.1"/>
    <property type="match status" value="1"/>
</dbReference>
<dbReference type="PANTHER" id="PTHR43221">
    <property type="entry name" value="PROTEASE HTPX"/>
    <property type="match status" value="1"/>
</dbReference>
<dbReference type="PANTHER" id="PTHR43221:SF1">
    <property type="entry name" value="PROTEASE HTPX"/>
    <property type="match status" value="1"/>
</dbReference>
<dbReference type="Pfam" id="PF01435">
    <property type="entry name" value="Peptidase_M48"/>
    <property type="match status" value="1"/>
</dbReference>
<evidence type="ECO:0000255" key="1">
    <source>
        <dbReference type="HAMAP-Rule" id="MF_00188"/>
    </source>
</evidence>
<name>HTPX_ACIBS</name>
<feature type="chain" id="PRO_1000098799" description="Protease HtpX">
    <location>
        <begin position="1"/>
        <end position="301"/>
    </location>
</feature>
<feature type="transmembrane region" description="Helical" evidence="1">
    <location>
        <begin position="4"/>
        <end position="24"/>
    </location>
</feature>
<feature type="transmembrane region" description="Helical" evidence="1">
    <location>
        <begin position="38"/>
        <end position="58"/>
    </location>
</feature>
<feature type="transmembrane region" description="Helical" evidence="1">
    <location>
        <begin position="155"/>
        <end position="175"/>
    </location>
</feature>
<feature type="transmembrane region" description="Helical" evidence="1">
    <location>
        <begin position="200"/>
        <end position="220"/>
    </location>
</feature>
<feature type="active site" evidence="1">
    <location>
        <position position="148"/>
    </location>
</feature>
<feature type="binding site" evidence="1">
    <location>
        <position position="147"/>
    </location>
    <ligand>
        <name>Zn(2+)</name>
        <dbReference type="ChEBI" id="CHEBI:29105"/>
        <note>catalytic</note>
    </ligand>
</feature>
<feature type="binding site" evidence="1">
    <location>
        <position position="151"/>
    </location>
    <ligand>
        <name>Zn(2+)</name>
        <dbReference type="ChEBI" id="CHEBI:29105"/>
        <note>catalytic</note>
    </ligand>
</feature>
<feature type="binding site" evidence="1">
    <location>
        <position position="226"/>
    </location>
    <ligand>
        <name>Zn(2+)</name>
        <dbReference type="ChEBI" id="CHEBI:29105"/>
        <note>catalytic</note>
    </ligand>
</feature>